<name>TMM74_MOUSE</name>
<reference key="1">
    <citation type="journal article" date="2005" name="Science">
        <title>The transcriptional landscape of the mammalian genome.</title>
        <authorList>
            <person name="Carninci P."/>
            <person name="Kasukawa T."/>
            <person name="Katayama S."/>
            <person name="Gough J."/>
            <person name="Frith M.C."/>
            <person name="Maeda N."/>
            <person name="Oyama R."/>
            <person name="Ravasi T."/>
            <person name="Lenhard B."/>
            <person name="Wells C."/>
            <person name="Kodzius R."/>
            <person name="Shimokawa K."/>
            <person name="Bajic V.B."/>
            <person name="Brenner S.E."/>
            <person name="Batalov S."/>
            <person name="Forrest A.R."/>
            <person name="Zavolan M."/>
            <person name="Davis M.J."/>
            <person name="Wilming L.G."/>
            <person name="Aidinis V."/>
            <person name="Allen J.E."/>
            <person name="Ambesi-Impiombato A."/>
            <person name="Apweiler R."/>
            <person name="Aturaliya R.N."/>
            <person name="Bailey T.L."/>
            <person name="Bansal M."/>
            <person name="Baxter L."/>
            <person name="Beisel K.W."/>
            <person name="Bersano T."/>
            <person name="Bono H."/>
            <person name="Chalk A.M."/>
            <person name="Chiu K.P."/>
            <person name="Choudhary V."/>
            <person name="Christoffels A."/>
            <person name="Clutterbuck D.R."/>
            <person name="Crowe M.L."/>
            <person name="Dalla E."/>
            <person name="Dalrymple B.P."/>
            <person name="de Bono B."/>
            <person name="Della Gatta G."/>
            <person name="di Bernardo D."/>
            <person name="Down T."/>
            <person name="Engstrom P."/>
            <person name="Fagiolini M."/>
            <person name="Faulkner G."/>
            <person name="Fletcher C.F."/>
            <person name="Fukushima T."/>
            <person name="Furuno M."/>
            <person name="Futaki S."/>
            <person name="Gariboldi M."/>
            <person name="Georgii-Hemming P."/>
            <person name="Gingeras T.R."/>
            <person name="Gojobori T."/>
            <person name="Green R.E."/>
            <person name="Gustincich S."/>
            <person name="Harbers M."/>
            <person name="Hayashi Y."/>
            <person name="Hensch T.K."/>
            <person name="Hirokawa N."/>
            <person name="Hill D."/>
            <person name="Huminiecki L."/>
            <person name="Iacono M."/>
            <person name="Ikeo K."/>
            <person name="Iwama A."/>
            <person name="Ishikawa T."/>
            <person name="Jakt M."/>
            <person name="Kanapin A."/>
            <person name="Katoh M."/>
            <person name="Kawasawa Y."/>
            <person name="Kelso J."/>
            <person name="Kitamura H."/>
            <person name="Kitano H."/>
            <person name="Kollias G."/>
            <person name="Krishnan S.P."/>
            <person name="Kruger A."/>
            <person name="Kummerfeld S.K."/>
            <person name="Kurochkin I.V."/>
            <person name="Lareau L.F."/>
            <person name="Lazarevic D."/>
            <person name="Lipovich L."/>
            <person name="Liu J."/>
            <person name="Liuni S."/>
            <person name="McWilliam S."/>
            <person name="Madan Babu M."/>
            <person name="Madera M."/>
            <person name="Marchionni L."/>
            <person name="Matsuda H."/>
            <person name="Matsuzawa S."/>
            <person name="Miki H."/>
            <person name="Mignone F."/>
            <person name="Miyake S."/>
            <person name="Morris K."/>
            <person name="Mottagui-Tabar S."/>
            <person name="Mulder N."/>
            <person name="Nakano N."/>
            <person name="Nakauchi H."/>
            <person name="Ng P."/>
            <person name="Nilsson R."/>
            <person name="Nishiguchi S."/>
            <person name="Nishikawa S."/>
            <person name="Nori F."/>
            <person name="Ohara O."/>
            <person name="Okazaki Y."/>
            <person name="Orlando V."/>
            <person name="Pang K.C."/>
            <person name="Pavan W.J."/>
            <person name="Pavesi G."/>
            <person name="Pesole G."/>
            <person name="Petrovsky N."/>
            <person name="Piazza S."/>
            <person name="Reed J."/>
            <person name="Reid J.F."/>
            <person name="Ring B.Z."/>
            <person name="Ringwald M."/>
            <person name="Rost B."/>
            <person name="Ruan Y."/>
            <person name="Salzberg S.L."/>
            <person name="Sandelin A."/>
            <person name="Schneider C."/>
            <person name="Schoenbach C."/>
            <person name="Sekiguchi K."/>
            <person name="Semple C.A."/>
            <person name="Seno S."/>
            <person name="Sessa L."/>
            <person name="Sheng Y."/>
            <person name="Shibata Y."/>
            <person name="Shimada H."/>
            <person name="Shimada K."/>
            <person name="Silva D."/>
            <person name="Sinclair B."/>
            <person name="Sperling S."/>
            <person name="Stupka E."/>
            <person name="Sugiura K."/>
            <person name="Sultana R."/>
            <person name="Takenaka Y."/>
            <person name="Taki K."/>
            <person name="Tammoja K."/>
            <person name="Tan S.L."/>
            <person name="Tang S."/>
            <person name="Taylor M.S."/>
            <person name="Tegner J."/>
            <person name="Teichmann S.A."/>
            <person name="Ueda H.R."/>
            <person name="van Nimwegen E."/>
            <person name="Verardo R."/>
            <person name="Wei C.L."/>
            <person name="Yagi K."/>
            <person name="Yamanishi H."/>
            <person name="Zabarovsky E."/>
            <person name="Zhu S."/>
            <person name="Zimmer A."/>
            <person name="Hide W."/>
            <person name="Bult C."/>
            <person name="Grimmond S.M."/>
            <person name="Teasdale R.D."/>
            <person name="Liu E.T."/>
            <person name="Brusic V."/>
            <person name="Quackenbush J."/>
            <person name="Wahlestedt C."/>
            <person name="Mattick J.S."/>
            <person name="Hume D.A."/>
            <person name="Kai C."/>
            <person name="Sasaki D."/>
            <person name="Tomaru Y."/>
            <person name="Fukuda S."/>
            <person name="Kanamori-Katayama M."/>
            <person name="Suzuki M."/>
            <person name="Aoki J."/>
            <person name="Arakawa T."/>
            <person name="Iida J."/>
            <person name="Imamura K."/>
            <person name="Itoh M."/>
            <person name="Kato T."/>
            <person name="Kawaji H."/>
            <person name="Kawagashira N."/>
            <person name="Kawashima T."/>
            <person name="Kojima M."/>
            <person name="Kondo S."/>
            <person name="Konno H."/>
            <person name="Nakano K."/>
            <person name="Ninomiya N."/>
            <person name="Nishio T."/>
            <person name="Okada M."/>
            <person name="Plessy C."/>
            <person name="Shibata K."/>
            <person name="Shiraki T."/>
            <person name="Suzuki S."/>
            <person name="Tagami M."/>
            <person name="Waki K."/>
            <person name="Watahiki A."/>
            <person name="Okamura-Oho Y."/>
            <person name="Suzuki H."/>
            <person name="Kawai J."/>
            <person name="Hayashizaki Y."/>
        </authorList>
    </citation>
    <scope>NUCLEOTIDE SEQUENCE [LARGE SCALE MRNA]</scope>
    <source>
        <strain>C57BL/6J</strain>
        <tissue>Corpora quadrigemina</tissue>
    </source>
</reference>
<reference key="2">
    <citation type="journal article" date="2004" name="Genome Res.">
        <title>The status, quality, and expansion of the NIH full-length cDNA project: the Mammalian Gene Collection (MGC).</title>
        <authorList>
            <consortium name="The MGC Project Team"/>
        </authorList>
    </citation>
    <scope>NUCLEOTIDE SEQUENCE [LARGE SCALE MRNA]</scope>
    <source>
        <tissue>Brain</tissue>
    </source>
</reference>
<reference key="3">
    <citation type="journal article" date="2010" name="Cell">
        <title>A tissue-specific atlas of mouse protein phosphorylation and expression.</title>
        <authorList>
            <person name="Huttlin E.L."/>
            <person name="Jedrychowski M.P."/>
            <person name="Elias J.E."/>
            <person name="Goswami T."/>
            <person name="Rad R."/>
            <person name="Beausoleil S.A."/>
            <person name="Villen J."/>
            <person name="Haas W."/>
            <person name="Sowa M.E."/>
            <person name="Gygi S.P."/>
        </authorList>
    </citation>
    <scope>PHOSPHORYLATION [LARGE SCALE ANALYSIS] AT SER-11</scope>
    <scope>IDENTIFICATION BY MASS SPECTROMETRY [LARGE SCALE ANALYSIS]</scope>
    <source>
        <tissue>Brain</tissue>
    </source>
</reference>
<sequence length="305" mass="33416">MELHSLSKRNSPVDPCNALEWSSGETSGDHIEEATIRDAFCYQKNLVSTPRADVVEVCRLSTSPASPTSLLQDSAIQTSFSLSGPPDSGNNQVMADRKVCNCCSQELETSFTYVDENVNLEQRSQRSPSAKGSNHPVDLGWGNPNEWSHETAMSLMSEDDDDTSSEATSSGKSVDYGFISAILFLVTGILLVIISYIVPREVTVDPNTVAAREMERLEKESAMLGAHLDRCVIAGLCLLTLGGVVLSCLLMMSMWKGELYRRNRFASSKESAKLYGSFNFRMKTSTNEDTLELSLVEEDALAVQS</sequence>
<gene>
    <name type="primary">Tmem74</name>
</gene>
<evidence type="ECO:0000250" key="1"/>
<evidence type="ECO:0000255" key="2"/>
<evidence type="ECO:0000256" key="3">
    <source>
        <dbReference type="SAM" id="MobiDB-lite"/>
    </source>
</evidence>
<evidence type="ECO:0000305" key="4"/>
<evidence type="ECO:0007744" key="5">
    <source>
    </source>
</evidence>
<organism>
    <name type="scientific">Mus musculus</name>
    <name type="common">Mouse</name>
    <dbReference type="NCBI Taxonomy" id="10090"/>
    <lineage>
        <taxon>Eukaryota</taxon>
        <taxon>Metazoa</taxon>
        <taxon>Chordata</taxon>
        <taxon>Craniata</taxon>
        <taxon>Vertebrata</taxon>
        <taxon>Euteleostomi</taxon>
        <taxon>Mammalia</taxon>
        <taxon>Eutheria</taxon>
        <taxon>Euarchontoglires</taxon>
        <taxon>Glires</taxon>
        <taxon>Rodentia</taxon>
        <taxon>Myomorpha</taxon>
        <taxon>Muroidea</taxon>
        <taxon>Muridae</taxon>
        <taxon>Murinae</taxon>
        <taxon>Mus</taxon>
        <taxon>Mus</taxon>
    </lineage>
</organism>
<comment type="function">
    <text evidence="1">Plays an essential role in autophagy. TMEM74-induced autophagy may involve PI3K signal transduction (By similarity).</text>
</comment>
<comment type="subcellular location">
    <subcellularLocation>
        <location>Lysosome membrane</location>
        <topology>Multi-pass membrane protein</topology>
    </subcellularLocation>
    <subcellularLocation>
        <location evidence="1">Cytoplasmic vesicle</location>
        <location evidence="1">Autophagosome membrane</location>
        <topology evidence="1">Multi-pass membrane protein</topology>
    </subcellularLocation>
</comment>
<comment type="similarity">
    <text evidence="4">Belongs to the TMEM74 family.</text>
</comment>
<feature type="chain" id="PRO_0000259601" description="Transmembrane protein 74">
    <location>
        <begin position="1"/>
        <end position="305"/>
    </location>
</feature>
<feature type="transmembrane region" description="Helical" evidence="2">
    <location>
        <begin position="178"/>
        <end position="198"/>
    </location>
</feature>
<feature type="transmembrane region" description="Helical" evidence="2">
    <location>
        <begin position="232"/>
        <end position="252"/>
    </location>
</feature>
<feature type="region of interest" description="Disordered" evidence="3">
    <location>
        <begin position="122"/>
        <end position="143"/>
    </location>
</feature>
<feature type="compositionally biased region" description="Polar residues" evidence="3">
    <location>
        <begin position="122"/>
        <end position="132"/>
    </location>
</feature>
<feature type="modified residue" description="Phosphoserine" evidence="5">
    <location>
        <position position="11"/>
    </location>
</feature>
<protein>
    <recommendedName>
        <fullName>Transmembrane protein 74</fullName>
    </recommendedName>
</protein>
<dbReference type="EMBL" id="AK046420">
    <property type="protein sequence ID" value="BAC32721.1"/>
    <property type="molecule type" value="mRNA"/>
</dbReference>
<dbReference type="EMBL" id="BC117021">
    <property type="protein sequence ID" value="AAI17022.1"/>
    <property type="molecule type" value="mRNA"/>
</dbReference>
<dbReference type="EMBL" id="BC117025">
    <property type="protein sequence ID" value="AAI17026.1"/>
    <property type="molecule type" value="mRNA"/>
</dbReference>
<dbReference type="CCDS" id="CCDS27454.1"/>
<dbReference type="RefSeq" id="NP_780711.1">
    <property type="nucleotide sequence ID" value="NM_175502.3"/>
</dbReference>
<dbReference type="RefSeq" id="XP_006520971.2">
    <property type="nucleotide sequence ID" value="XM_006520908.5"/>
</dbReference>
<dbReference type="FunCoup" id="Q8BQU7">
    <property type="interactions" value="975"/>
</dbReference>
<dbReference type="STRING" id="10090.ENSMUSP00000070748"/>
<dbReference type="iPTMnet" id="Q8BQU7"/>
<dbReference type="PhosphoSitePlus" id="Q8BQU7"/>
<dbReference type="PaxDb" id="10090-ENSMUSP00000070748"/>
<dbReference type="ProteomicsDB" id="259262"/>
<dbReference type="Antibodypedia" id="3040">
    <property type="antibodies" value="83 antibodies from 22 providers"/>
</dbReference>
<dbReference type="DNASU" id="239408"/>
<dbReference type="Ensembl" id="ENSMUST00000067469.6">
    <property type="protein sequence ID" value="ENSMUSP00000070748.5"/>
    <property type="gene ID" value="ENSMUSG00000054409.6"/>
</dbReference>
<dbReference type="GeneID" id="239408"/>
<dbReference type="KEGG" id="mmu:239408"/>
<dbReference type="UCSC" id="uc007vpn.1">
    <property type="organism name" value="mouse"/>
</dbReference>
<dbReference type="AGR" id="MGI:2443417"/>
<dbReference type="CTD" id="157753"/>
<dbReference type="MGI" id="MGI:2443417">
    <property type="gene designation" value="Tmem74"/>
</dbReference>
<dbReference type="VEuPathDB" id="HostDB:ENSMUSG00000054409"/>
<dbReference type="eggNOG" id="ENOG502QUYY">
    <property type="taxonomic scope" value="Eukaryota"/>
</dbReference>
<dbReference type="GeneTree" id="ENSGT00530000063880"/>
<dbReference type="HOGENOM" id="CLU_079915_0_0_1"/>
<dbReference type="InParanoid" id="Q8BQU7"/>
<dbReference type="OMA" id="WSHESAI"/>
<dbReference type="OrthoDB" id="6096234at2759"/>
<dbReference type="PhylomeDB" id="Q8BQU7"/>
<dbReference type="TreeFam" id="TF335735"/>
<dbReference type="BioGRID-ORCS" id="239408">
    <property type="hits" value="2 hits in 77 CRISPR screens"/>
</dbReference>
<dbReference type="ChiTaRS" id="Tmem74">
    <property type="organism name" value="mouse"/>
</dbReference>
<dbReference type="PRO" id="PR:Q8BQU7"/>
<dbReference type="Proteomes" id="UP000000589">
    <property type="component" value="Chromosome 15"/>
</dbReference>
<dbReference type="RNAct" id="Q8BQU7">
    <property type="molecule type" value="protein"/>
</dbReference>
<dbReference type="Bgee" id="ENSMUSG00000054409">
    <property type="expression patterns" value="Expressed in lumbar dorsal root ganglion and 88 other cell types or tissues"/>
</dbReference>
<dbReference type="GO" id="GO:0000421">
    <property type="term" value="C:autophagosome membrane"/>
    <property type="evidence" value="ECO:0007669"/>
    <property type="project" value="UniProtKB-SubCell"/>
</dbReference>
<dbReference type="GO" id="GO:0031410">
    <property type="term" value="C:cytoplasmic vesicle"/>
    <property type="evidence" value="ECO:0007669"/>
    <property type="project" value="UniProtKB-KW"/>
</dbReference>
<dbReference type="GO" id="GO:0005765">
    <property type="term" value="C:lysosomal membrane"/>
    <property type="evidence" value="ECO:0007669"/>
    <property type="project" value="UniProtKB-SubCell"/>
</dbReference>
<dbReference type="GO" id="GO:0005886">
    <property type="term" value="C:plasma membrane"/>
    <property type="evidence" value="ECO:0000314"/>
    <property type="project" value="MGI"/>
</dbReference>
<dbReference type="GO" id="GO:0044325">
    <property type="term" value="F:transmembrane transporter binding"/>
    <property type="evidence" value="ECO:0000353"/>
    <property type="project" value="MGI"/>
</dbReference>
<dbReference type="GO" id="GO:0051867">
    <property type="term" value="P:general adaptation syndrome, behavioral process"/>
    <property type="evidence" value="ECO:0000314"/>
    <property type="project" value="MGI"/>
</dbReference>
<dbReference type="GO" id="GO:0016236">
    <property type="term" value="P:macroautophagy"/>
    <property type="evidence" value="ECO:0007669"/>
    <property type="project" value="Ensembl"/>
</dbReference>
<dbReference type="InterPro" id="IPR029695">
    <property type="entry name" value="TMEM74-like"/>
</dbReference>
<dbReference type="PANTHER" id="PTHR16125">
    <property type="entry name" value="TRANSMEMBRANE PROTEIN 74"/>
    <property type="match status" value="1"/>
</dbReference>
<dbReference type="PANTHER" id="PTHR16125:SF3">
    <property type="entry name" value="TRANSMEMBRANE PROTEIN 74"/>
    <property type="match status" value="1"/>
</dbReference>
<dbReference type="Pfam" id="PF14927">
    <property type="entry name" value="Neurensin"/>
    <property type="match status" value="1"/>
</dbReference>
<accession>Q8BQU7</accession>
<proteinExistence type="evidence at protein level"/>
<keyword id="KW-0072">Autophagy</keyword>
<keyword id="KW-0968">Cytoplasmic vesicle</keyword>
<keyword id="KW-0458">Lysosome</keyword>
<keyword id="KW-0472">Membrane</keyword>
<keyword id="KW-0597">Phosphoprotein</keyword>
<keyword id="KW-1185">Reference proteome</keyword>
<keyword id="KW-0812">Transmembrane</keyword>
<keyword id="KW-1133">Transmembrane helix</keyword>